<feature type="chain" id="PRO_0000132027" description="Cytidylate kinase">
    <location>
        <begin position="1"/>
        <end position="190"/>
    </location>
</feature>
<feature type="binding site" evidence="1">
    <location>
        <begin position="7"/>
        <end position="15"/>
    </location>
    <ligand>
        <name>ATP</name>
        <dbReference type="ChEBI" id="CHEBI:30616"/>
    </ligand>
</feature>
<proteinExistence type="inferred from homology"/>
<comment type="catalytic activity">
    <reaction evidence="1">
        <text>CMP + ATP = CDP + ADP</text>
        <dbReference type="Rhea" id="RHEA:11600"/>
        <dbReference type="ChEBI" id="CHEBI:30616"/>
        <dbReference type="ChEBI" id="CHEBI:58069"/>
        <dbReference type="ChEBI" id="CHEBI:60377"/>
        <dbReference type="ChEBI" id="CHEBI:456216"/>
        <dbReference type="EC" id="2.7.4.25"/>
    </reaction>
</comment>
<comment type="catalytic activity">
    <reaction evidence="1">
        <text>dCMP + ATP = dCDP + ADP</text>
        <dbReference type="Rhea" id="RHEA:25094"/>
        <dbReference type="ChEBI" id="CHEBI:30616"/>
        <dbReference type="ChEBI" id="CHEBI:57566"/>
        <dbReference type="ChEBI" id="CHEBI:58593"/>
        <dbReference type="ChEBI" id="CHEBI:456216"/>
        <dbReference type="EC" id="2.7.4.25"/>
    </reaction>
</comment>
<comment type="subcellular location">
    <subcellularLocation>
        <location evidence="1">Cytoplasm</location>
    </subcellularLocation>
</comment>
<comment type="similarity">
    <text evidence="1">Belongs to the cytidylate kinase family. Type 2 subfamily.</text>
</comment>
<reference key="1">
    <citation type="journal article" date="2000" name="Proc. Natl. Acad. Sci. U.S.A.">
        <title>Archaeal adaptation to higher temperatures revealed by genomic sequence of Thermoplasma volcanium.</title>
        <authorList>
            <person name="Kawashima T."/>
            <person name="Amano N."/>
            <person name="Koike H."/>
            <person name="Makino S."/>
            <person name="Higuchi S."/>
            <person name="Kawashima-Ohya Y."/>
            <person name="Watanabe K."/>
            <person name="Yamazaki M."/>
            <person name="Kanehori K."/>
            <person name="Kawamoto T."/>
            <person name="Nunoshiba T."/>
            <person name="Yamamoto Y."/>
            <person name="Aramaki H."/>
            <person name="Makino K."/>
            <person name="Suzuki M."/>
        </authorList>
    </citation>
    <scope>NUCLEOTIDE SEQUENCE [LARGE SCALE GENOMIC DNA]</scope>
    <source>
        <strain>ATCC 51530 / DSM 4299 / JCM 9571 / NBRC 15438 / GSS1</strain>
    </source>
</reference>
<organism>
    <name type="scientific">Thermoplasma volcanium (strain ATCC 51530 / DSM 4299 / JCM 9571 / NBRC 15438 / GSS1)</name>
    <dbReference type="NCBI Taxonomy" id="273116"/>
    <lineage>
        <taxon>Archaea</taxon>
        <taxon>Methanobacteriati</taxon>
        <taxon>Thermoplasmatota</taxon>
        <taxon>Thermoplasmata</taxon>
        <taxon>Thermoplasmatales</taxon>
        <taxon>Thermoplasmataceae</taxon>
        <taxon>Thermoplasma</taxon>
    </lineage>
</organism>
<gene>
    <name evidence="1" type="primary">cmk</name>
    <name type="ordered locus">TV0355</name>
    <name type="ORF">TVG0347128</name>
</gene>
<dbReference type="EC" id="2.7.4.25" evidence="1"/>
<dbReference type="EMBL" id="BA000011">
    <property type="protein sequence ID" value="BAB59497.1"/>
    <property type="molecule type" value="Genomic_DNA"/>
</dbReference>
<dbReference type="RefSeq" id="WP_010916609.1">
    <property type="nucleotide sequence ID" value="NC_002689.2"/>
</dbReference>
<dbReference type="SMR" id="Q97BV0"/>
<dbReference type="STRING" id="273116.gene:9381132"/>
<dbReference type="PaxDb" id="273116-14324570"/>
<dbReference type="GeneID" id="1440867"/>
<dbReference type="KEGG" id="tvo:TVG0347128"/>
<dbReference type="eggNOG" id="arCOG01037">
    <property type="taxonomic scope" value="Archaea"/>
</dbReference>
<dbReference type="HOGENOM" id="CLU_079959_1_0_2"/>
<dbReference type="OrthoDB" id="31096at2157"/>
<dbReference type="PhylomeDB" id="Q97BV0"/>
<dbReference type="Proteomes" id="UP000001017">
    <property type="component" value="Chromosome"/>
</dbReference>
<dbReference type="GO" id="GO:0005737">
    <property type="term" value="C:cytoplasm"/>
    <property type="evidence" value="ECO:0007669"/>
    <property type="project" value="UniProtKB-SubCell"/>
</dbReference>
<dbReference type="GO" id="GO:0005524">
    <property type="term" value="F:ATP binding"/>
    <property type="evidence" value="ECO:0007669"/>
    <property type="project" value="UniProtKB-UniRule"/>
</dbReference>
<dbReference type="GO" id="GO:0036430">
    <property type="term" value="F:CMP kinase activity"/>
    <property type="evidence" value="ECO:0007669"/>
    <property type="project" value="RHEA"/>
</dbReference>
<dbReference type="GO" id="GO:0036431">
    <property type="term" value="F:dCMP kinase activity"/>
    <property type="evidence" value="ECO:0007669"/>
    <property type="project" value="RHEA"/>
</dbReference>
<dbReference type="GO" id="GO:0006220">
    <property type="term" value="P:pyrimidine nucleotide metabolic process"/>
    <property type="evidence" value="ECO:0007669"/>
    <property type="project" value="UniProtKB-UniRule"/>
</dbReference>
<dbReference type="CDD" id="cd02020">
    <property type="entry name" value="CMPK"/>
    <property type="match status" value="1"/>
</dbReference>
<dbReference type="Gene3D" id="3.40.50.300">
    <property type="entry name" value="P-loop containing nucleotide triphosphate hydrolases"/>
    <property type="match status" value="1"/>
</dbReference>
<dbReference type="HAMAP" id="MF_00239">
    <property type="entry name" value="Cytidyl_kinase_type2"/>
    <property type="match status" value="1"/>
</dbReference>
<dbReference type="InterPro" id="IPR011892">
    <property type="entry name" value="Cyt_kin_arch"/>
</dbReference>
<dbReference type="InterPro" id="IPR011994">
    <property type="entry name" value="Cytidylate_kinase_dom"/>
</dbReference>
<dbReference type="InterPro" id="IPR027417">
    <property type="entry name" value="P-loop_NTPase"/>
</dbReference>
<dbReference type="NCBIfam" id="TIGR02173">
    <property type="entry name" value="cyt_kin_arch"/>
    <property type="match status" value="1"/>
</dbReference>
<dbReference type="Pfam" id="PF13189">
    <property type="entry name" value="Cytidylate_kin2"/>
    <property type="match status" value="1"/>
</dbReference>
<dbReference type="SUPFAM" id="SSF52540">
    <property type="entry name" value="P-loop containing nucleoside triphosphate hydrolases"/>
    <property type="match status" value="1"/>
</dbReference>
<keyword id="KW-0067">ATP-binding</keyword>
<keyword id="KW-0963">Cytoplasm</keyword>
<keyword id="KW-0418">Kinase</keyword>
<keyword id="KW-0547">Nucleotide-binding</keyword>
<keyword id="KW-0808">Transferase</keyword>
<protein>
    <recommendedName>
        <fullName evidence="1">Cytidylate kinase</fullName>
        <shortName evidence="1">CK</shortName>
        <ecNumber evidence="1">2.7.4.25</ecNumber>
    </recommendedName>
    <alternativeName>
        <fullName evidence="1">Cytidine monophosphate kinase</fullName>
        <shortName evidence="1">CMP kinase</shortName>
    </alternativeName>
</protein>
<sequence length="190" mass="21850">MRITIAGKIGSGKSTVSQEISKITGYSVYSSGTFFRESAKKMGMSIEDFNRYAETHPEADYATDGMQKDFMETHDNIIVEGRLAGWICKIYSISAFKVFLYATRYTRLVRFSNREGIEIDEAAKLLDEREISEKKRYLDLYGIDIDDLSIYDIVVNTEFMKPEEVAVLVLNRIDEMSRKEVYTPRILKGM</sequence>
<evidence type="ECO:0000255" key="1">
    <source>
        <dbReference type="HAMAP-Rule" id="MF_00239"/>
    </source>
</evidence>
<accession>Q97BV0</accession>
<name>KCY_THEVO</name>